<reference key="1">
    <citation type="submission" date="2007-07" db="EMBL/GenBank/DDBJ databases">
        <authorList>
            <consortium name="NIH - Mammalian Gene Collection (MGC) project"/>
        </authorList>
    </citation>
    <scope>NUCLEOTIDE SEQUENCE [LARGE SCALE MRNA]</scope>
    <source>
        <strain>Hereford</strain>
        <tissue>Fetal skin</tissue>
    </source>
</reference>
<accession>A6QP72</accession>
<gene>
    <name type="primary">DGAT2L6</name>
</gene>
<name>DG2L6_BOVIN</name>
<comment type="function">
    <text evidence="2">Diglyceride acyltransferase that uses fatty acyl-CoA as substrate. Particularly active with oleate as a substrate. Has no wax synthase activity to produce wax esters.</text>
</comment>
<comment type="catalytic activity">
    <reaction evidence="2">
        <text>1,2-di-(9Z-octadecenoyl)-sn-glycerol + (9Z)-octadecenoyl-CoA = 1,2,3-tri-(9Z-octadecenoyl)-glycerol + CoA</text>
        <dbReference type="Rhea" id="RHEA:38219"/>
        <dbReference type="ChEBI" id="CHEBI:52333"/>
        <dbReference type="ChEBI" id="CHEBI:53753"/>
        <dbReference type="ChEBI" id="CHEBI:57287"/>
        <dbReference type="ChEBI" id="CHEBI:57387"/>
    </reaction>
</comment>
<comment type="subcellular location">
    <subcellularLocation>
        <location evidence="1">Endoplasmic reticulum membrane</location>
        <topology evidence="1">Multi-pass membrane protein</topology>
    </subcellularLocation>
</comment>
<comment type="similarity">
    <text evidence="4">Belongs to the diacylglycerol acyltransferase family.</text>
</comment>
<dbReference type="EC" id="2.3.1.-" evidence="2"/>
<dbReference type="EMBL" id="BC149181">
    <property type="protein sequence ID" value="AAI49182.1"/>
    <property type="molecule type" value="mRNA"/>
</dbReference>
<dbReference type="RefSeq" id="NP_001095331.2">
    <property type="nucleotide sequence ID" value="NM_001101861.1"/>
</dbReference>
<dbReference type="FunCoup" id="A6QP72">
    <property type="interactions" value="180"/>
</dbReference>
<dbReference type="STRING" id="9913.ENSBTAP00000010259"/>
<dbReference type="PaxDb" id="9913-ENSBTAP00000010259"/>
<dbReference type="GeneID" id="505958"/>
<dbReference type="KEGG" id="bta:505958"/>
<dbReference type="CTD" id="347516"/>
<dbReference type="eggNOG" id="KOG0831">
    <property type="taxonomic scope" value="Eukaryota"/>
</dbReference>
<dbReference type="HOGENOM" id="CLU_023995_0_0_1"/>
<dbReference type="InParanoid" id="A6QP72"/>
<dbReference type="OrthoDB" id="264532at2759"/>
<dbReference type="TreeFam" id="TF314707"/>
<dbReference type="Proteomes" id="UP000009136">
    <property type="component" value="Unplaced"/>
</dbReference>
<dbReference type="GO" id="GO:0005789">
    <property type="term" value="C:endoplasmic reticulum membrane"/>
    <property type="evidence" value="ECO:0000318"/>
    <property type="project" value="GO_Central"/>
</dbReference>
<dbReference type="GO" id="GO:0008374">
    <property type="term" value="F:O-acyltransferase activity"/>
    <property type="evidence" value="ECO:0000318"/>
    <property type="project" value="GO_Central"/>
</dbReference>
<dbReference type="GO" id="GO:0006629">
    <property type="term" value="P:lipid metabolic process"/>
    <property type="evidence" value="ECO:0000318"/>
    <property type="project" value="GO_Central"/>
</dbReference>
<dbReference type="CDD" id="cd07987">
    <property type="entry name" value="LPLAT_MGAT-like"/>
    <property type="match status" value="1"/>
</dbReference>
<dbReference type="InterPro" id="IPR007130">
    <property type="entry name" value="DAGAT"/>
</dbReference>
<dbReference type="PANTHER" id="PTHR12317">
    <property type="entry name" value="DIACYLGLYCEROL O-ACYLTRANSFERASE"/>
    <property type="match status" value="1"/>
</dbReference>
<dbReference type="PANTHER" id="PTHR12317:SF19">
    <property type="entry name" value="DIACYLGLYCEROL O-ACYLTRANSFERASE 2-LIKE PROTEIN 6"/>
    <property type="match status" value="1"/>
</dbReference>
<dbReference type="Pfam" id="PF03982">
    <property type="entry name" value="DAGAT"/>
    <property type="match status" value="1"/>
</dbReference>
<dbReference type="SUPFAM" id="SSF69593">
    <property type="entry name" value="Glycerol-3-phosphate (1)-acyltransferase"/>
    <property type="match status" value="1"/>
</dbReference>
<organism>
    <name type="scientific">Bos taurus</name>
    <name type="common">Bovine</name>
    <dbReference type="NCBI Taxonomy" id="9913"/>
    <lineage>
        <taxon>Eukaryota</taxon>
        <taxon>Metazoa</taxon>
        <taxon>Chordata</taxon>
        <taxon>Craniata</taxon>
        <taxon>Vertebrata</taxon>
        <taxon>Euteleostomi</taxon>
        <taxon>Mammalia</taxon>
        <taxon>Eutheria</taxon>
        <taxon>Laurasiatheria</taxon>
        <taxon>Artiodactyla</taxon>
        <taxon>Ruminantia</taxon>
        <taxon>Pecora</taxon>
        <taxon>Bovidae</taxon>
        <taxon>Bovinae</taxon>
        <taxon>Bos</taxon>
    </lineage>
</organism>
<proteinExistence type="evidence at transcript level"/>
<feature type="chain" id="PRO_0000320298" description="Diacylglycerol O-acyltransferase 2-like protein 6">
    <location>
        <begin position="1"/>
        <end position="337"/>
    </location>
</feature>
<feature type="transmembrane region" description="Helical" evidence="3">
    <location>
        <begin position="22"/>
        <end position="42"/>
    </location>
</feature>
<feature type="transmembrane region" description="Helical" evidence="3">
    <location>
        <begin position="102"/>
        <end position="122"/>
    </location>
</feature>
<protein>
    <recommendedName>
        <fullName>Diacylglycerol O-acyltransferase 2-like protein 6</fullName>
        <ecNumber evidence="2">2.3.1.-</ecNumber>
    </recommendedName>
</protein>
<sequence length="337" mass="38327">MAFLSQLNLQEILQTLSVLQWMPVYVFLGAIPIIVIPYFLVFTKFWMVSVLALAWLAYDWNTHSQGGRRSAWVRNWTIWKYFQNYFPIKLVKTHDLSPRHNYIIASHPHGVLPYGTFINFATETTGFARIFPGITPYVATLEGIFWIPIVREYVMSMGVCPVSELALKYLLTQKGSGNAVVIMVGGGAEALLCHPGATTVLLKQRKGFVKVALETGAYLVPSYSFGQNEVHNQETFPEGTWKRFFQKALQDTLKKLLRLSVCTFHGRGLTRGSWGFLPFNHPITTVVGEPLPIPRIKKPNEETVDKYHALYINALQKLFDEHKVQYGLSETQELTII</sequence>
<keyword id="KW-0012">Acyltransferase</keyword>
<keyword id="KW-0256">Endoplasmic reticulum</keyword>
<keyword id="KW-0444">Lipid biosynthesis</keyword>
<keyword id="KW-0443">Lipid metabolism</keyword>
<keyword id="KW-0472">Membrane</keyword>
<keyword id="KW-1185">Reference proteome</keyword>
<keyword id="KW-0808">Transferase</keyword>
<keyword id="KW-0812">Transmembrane</keyword>
<keyword id="KW-1133">Transmembrane helix</keyword>
<evidence type="ECO:0000250" key="1"/>
<evidence type="ECO:0000250" key="2">
    <source>
        <dbReference type="UniProtKB" id="Q6ZPD8"/>
    </source>
</evidence>
<evidence type="ECO:0000255" key="3"/>
<evidence type="ECO:0000305" key="4"/>